<evidence type="ECO:0000250" key="1"/>
<evidence type="ECO:0000255" key="2">
    <source>
        <dbReference type="PROSITE-ProRule" id="PRU00783"/>
    </source>
</evidence>
<evidence type="ECO:0000305" key="3"/>
<sequence length="305" mass="33653">MENKYTHGVLFYHEHSGLKNINQGIGEVTTALSSICKHLSIQLSENEGDIIKYCQEIKTKNYAKDVDILFILGGDGTVNELINGVMTHDLQLPIGILPGGTFNDFTKTLNIAPNHKQASEQMISAQVGKYDVIKINNQYALNFVGLGLIVQNAENVQDGSKDIFGKLSYIGSTVKTLLNPTQFNYQLSIDDKTYSGETTMILTANGPFIGGSRIPLTDLSPQDGELNTFIFNEQSFSILNDIFKKRDSMNWNEITQGIEHIPGKKISLTTDPAMKVDIDGEISLETPIDIEVIPNAIQLLTVNDL</sequence>
<organism>
    <name type="scientific">Staphylococcus aureus (strain MW2)</name>
    <dbReference type="NCBI Taxonomy" id="196620"/>
    <lineage>
        <taxon>Bacteria</taxon>
        <taxon>Bacillati</taxon>
        <taxon>Bacillota</taxon>
        <taxon>Bacilli</taxon>
        <taxon>Bacillales</taxon>
        <taxon>Staphylococcaceae</taxon>
        <taxon>Staphylococcus</taxon>
    </lineage>
</organism>
<proteinExistence type="inferred from homology"/>
<gene>
    <name type="ordered locus">MW0688</name>
</gene>
<dbReference type="EC" id="2.7.1.-"/>
<dbReference type="EMBL" id="BA000033">
    <property type="protein sequence ID" value="BAB94553.1"/>
    <property type="molecule type" value="Genomic_DNA"/>
</dbReference>
<dbReference type="RefSeq" id="WP_000429008.1">
    <property type="nucleotide sequence ID" value="NC_003923.1"/>
</dbReference>
<dbReference type="SMR" id="Q8NXN1"/>
<dbReference type="KEGG" id="sam:MW0688"/>
<dbReference type="HOGENOM" id="CLU_045532_1_0_9"/>
<dbReference type="GO" id="GO:0005886">
    <property type="term" value="C:plasma membrane"/>
    <property type="evidence" value="ECO:0007669"/>
    <property type="project" value="TreeGrafter"/>
</dbReference>
<dbReference type="GO" id="GO:0005524">
    <property type="term" value="F:ATP binding"/>
    <property type="evidence" value="ECO:0007669"/>
    <property type="project" value="UniProtKB-KW"/>
</dbReference>
<dbReference type="GO" id="GO:0004143">
    <property type="term" value="F:ATP-dependent diacylglycerol kinase activity"/>
    <property type="evidence" value="ECO:0007669"/>
    <property type="project" value="TreeGrafter"/>
</dbReference>
<dbReference type="GO" id="GO:0046872">
    <property type="term" value="F:metal ion binding"/>
    <property type="evidence" value="ECO:0007669"/>
    <property type="project" value="UniProtKB-KW"/>
</dbReference>
<dbReference type="GO" id="GO:0008654">
    <property type="term" value="P:phospholipid biosynthetic process"/>
    <property type="evidence" value="ECO:0007669"/>
    <property type="project" value="UniProtKB-KW"/>
</dbReference>
<dbReference type="Gene3D" id="2.60.200.40">
    <property type="match status" value="1"/>
</dbReference>
<dbReference type="Gene3D" id="3.40.50.10330">
    <property type="entry name" value="Probable inorganic polyphosphate/atp-NAD kinase, domain 1"/>
    <property type="match status" value="1"/>
</dbReference>
<dbReference type="InterPro" id="IPR017438">
    <property type="entry name" value="ATP-NAD_kinase_N"/>
</dbReference>
<dbReference type="InterPro" id="IPR005218">
    <property type="entry name" value="Diacylglycerol/lipid_kinase"/>
</dbReference>
<dbReference type="InterPro" id="IPR001206">
    <property type="entry name" value="Diacylglycerol_kinase_cat_dom"/>
</dbReference>
<dbReference type="InterPro" id="IPR050187">
    <property type="entry name" value="Lipid_Phosphate_FormReg"/>
</dbReference>
<dbReference type="InterPro" id="IPR016064">
    <property type="entry name" value="NAD/diacylglycerol_kinase_sf"/>
</dbReference>
<dbReference type="InterPro" id="IPR045540">
    <property type="entry name" value="YegS/DAGK_C"/>
</dbReference>
<dbReference type="NCBIfam" id="TIGR00147">
    <property type="entry name" value="YegS/Rv2252/BmrU family lipid kinase"/>
    <property type="match status" value="1"/>
</dbReference>
<dbReference type="PANTHER" id="PTHR12358:SF106">
    <property type="entry name" value="LIPID KINASE YEGS"/>
    <property type="match status" value="1"/>
</dbReference>
<dbReference type="PANTHER" id="PTHR12358">
    <property type="entry name" value="SPHINGOSINE KINASE"/>
    <property type="match status" value="1"/>
</dbReference>
<dbReference type="Pfam" id="PF00781">
    <property type="entry name" value="DAGK_cat"/>
    <property type="match status" value="1"/>
</dbReference>
<dbReference type="Pfam" id="PF19279">
    <property type="entry name" value="YegS_C"/>
    <property type="match status" value="1"/>
</dbReference>
<dbReference type="SMART" id="SM00046">
    <property type="entry name" value="DAGKc"/>
    <property type="match status" value="1"/>
</dbReference>
<dbReference type="SUPFAM" id="SSF111331">
    <property type="entry name" value="NAD kinase/diacylglycerol kinase-like"/>
    <property type="match status" value="1"/>
</dbReference>
<dbReference type="PROSITE" id="PS50146">
    <property type="entry name" value="DAGK"/>
    <property type="match status" value="1"/>
</dbReference>
<feature type="chain" id="PRO_0000386517" description="Putative lipid kinase MW0688">
    <location>
        <begin position="1"/>
        <end position="305"/>
    </location>
</feature>
<feature type="domain" description="DAGKc" evidence="2">
    <location>
        <begin position="3"/>
        <end position="139"/>
    </location>
</feature>
<feature type="active site" description="Proton acceptor" evidence="1">
    <location>
        <position position="281"/>
    </location>
</feature>
<feature type="binding site" evidence="2">
    <location>
        <position position="44"/>
    </location>
    <ligand>
        <name>ATP</name>
        <dbReference type="ChEBI" id="CHEBI:30616"/>
    </ligand>
</feature>
<feature type="binding site" evidence="2">
    <location>
        <begin position="74"/>
        <end position="80"/>
    </location>
    <ligand>
        <name>ATP</name>
        <dbReference type="ChEBI" id="CHEBI:30616"/>
    </ligand>
</feature>
<feature type="binding site" evidence="2">
    <location>
        <position position="101"/>
    </location>
    <ligand>
        <name>ATP</name>
        <dbReference type="ChEBI" id="CHEBI:30616"/>
    </ligand>
</feature>
<feature type="binding site" evidence="1">
    <location>
        <position position="220"/>
    </location>
    <ligand>
        <name>Mg(2+)</name>
        <dbReference type="ChEBI" id="CHEBI:18420"/>
    </ligand>
</feature>
<feature type="binding site" evidence="1">
    <location>
        <position position="223"/>
    </location>
    <ligand>
        <name>Mg(2+)</name>
        <dbReference type="ChEBI" id="CHEBI:18420"/>
    </ligand>
</feature>
<feature type="binding site" evidence="1">
    <location>
        <position position="225"/>
    </location>
    <ligand>
        <name>Mg(2+)</name>
        <dbReference type="ChEBI" id="CHEBI:18420"/>
    </ligand>
</feature>
<reference key="1">
    <citation type="journal article" date="2002" name="Lancet">
        <title>Genome and virulence determinants of high virulence community-acquired MRSA.</title>
        <authorList>
            <person name="Baba T."/>
            <person name="Takeuchi F."/>
            <person name="Kuroda M."/>
            <person name="Yuzawa H."/>
            <person name="Aoki K."/>
            <person name="Oguchi A."/>
            <person name="Nagai Y."/>
            <person name="Iwama N."/>
            <person name="Asano K."/>
            <person name="Naimi T."/>
            <person name="Kuroda H."/>
            <person name="Cui L."/>
            <person name="Yamamoto K."/>
            <person name="Hiramatsu K."/>
        </authorList>
    </citation>
    <scope>NUCLEOTIDE SEQUENCE [LARGE SCALE GENOMIC DNA]</scope>
    <source>
        <strain>MW2</strain>
    </source>
</reference>
<keyword id="KW-0067">ATP-binding</keyword>
<keyword id="KW-0418">Kinase</keyword>
<keyword id="KW-0444">Lipid biosynthesis</keyword>
<keyword id="KW-0443">Lipid metabolism</keyword>
<keyword id="KW-0460">Magnesium</keyword>
<keyword id="KW-0479">Metal-binding</keyword>
<keyword id="KW-0547">Nucleotide-binding</keyword>
<keyword id="KW-0594">Phospholipid biosynthesis</keyword>
<keyword id="KW-1208">Phospholipid metabolism</keyword>
<keyword id="KW-0808">Transferase</keyword>
<name>Y688_STAAW</name>
<accession>Q8NXN1</accession>
<comment type="function">
    <text evidence="1">May catalyze the ATP-dependent phosphorylation of lipids other than diacylglycerol (DAG).</text>
</comment>
<comment type="cofactor">
    <cofactor evidence="1">
        <name>Mg(2+)</name>
        <dbReference type="ChEBI" id="CHEBI:18420"/>
    </cofactor>
    <text evidence="1">Binds 1 Mg(2+) ion per subunit. This ion appears to have a structural role and is required for catalytic activity.</text>
</comment>
<comment type="similarity">
    <text evidence="3">Belongs to the diacylglycerol/lipid kinase family.</text>
</comment>
<protein>
    <recommendedName>
        <fullName>Putative lipid kinase MW0688</fullName>
        <ecNumber>2.7.1.-</ecNumber>
    </recommendedName>
</protein>